<dbReference type="EC" id="6.3.5.3" evidence="1"/>
<dbReference type="EMBL" id="CP000100">
    <property type="protein sequence ID" value="ABB56035.1"/>
    <property type="molecule type" value="Genomic_DNA"/>
</dbReference>
<dbReference type="EMBL" id="U33322">
    <property type="protein sequence ID" value="AAA75111.2"/>
    <property type="molecule type" value="Genomic_DNA"/>
</dbReference>
<dbReference type="RefSeq" id="WP_011243804.1">
    <property type="nucleotide sequence ID" value="NZ_JACJTX010000002.1"/>
</dbReference>
<dbReference type="SMR" id="Q55041"/>
<dbReference type="STRING" id="1140.Synpcc7942_0003"/>
<dbReference type="PaxDb" id="1140-Synpcc7942_0003"/>
<dbReference type="GeneID" id="72428811"/>
<dbReference type="KEGG" id="syf:Synpcc7942_0003"/>
<dbReference type="eggNOG" id="COG0046">
    <property type="taxonomic scope" value="Bacteria"/>
</dbReference>
<dbReference type="HOGENOM" id="CLU_003100_0_1_3"/>
<dbReference type="OrthoDB" id="9804441at2"/>
<dbReference type="BioCyc" id="SYNEL:SYNPCC7942_0003-MONOMER"/>
<dbReference type="UniPathway" id="UPA00074">
    <property type="reaction ID" value="UER00128"/>
</dbReference>
<dbReference type="Proteomes" id="UP000889800">
    <property type="component" value="Chromosome"/>
</dbReference>
<dbReference type="GO" id="GO:0005737">
    <property type="term" value="C:cytoplasm"/>
    <property type="evidence" value="ECO:0007669"/>
    <property type="project" value="UniProtKB-SubCell"/>
</dbReference>
<dbReference type="GO" id="GO:0005524">
    <property type="term" value="F:ATP binding"/>
    <property type="evidence" value="ECO:0007669"/>
    <property type="project" value="UniProtKB-UniRule"/>
</dbReference>
<dbReference type="GO" id="GO:0000287">
    <property type="term" value="F:magnesium ion binding"/>
    <property type="evidence" value="ECO:0007669"/>
    <property type="project" value="UniProtKB-UniRule"/>
</dbReference>
<dbReference type="GO" id="GO:0004642">
    <property type="term" value="F:phosphoribosylformylglycinamidine synthase activity"/>
    <property type="evidence" value="ECO:0007669"/>
    <property type="project" value="UniProtKB-UniRule"/>
</dbReference>
<dbReference type="GO" id="GO:0006189">
    <property type="term" value="P:'de novo' IMP biosynthetic process"/>
    <property type="evidence" value="ECO:0007669"/>
    <property type="project" value="UniProtKB-UniRule"/>
</dbReference>
<dbReference type="CDD" id="cd02203">
    <property type="entry name" value="PurL_repeat1"/>
    <property type="match status" value="1"/>
</dbReference>
<dbReference type="CDD" id="cd02204">
    <property type="entry name" value="PurL_repeat2"/>
    <property type="match status" value="1"/>
</dbReference>
<dbReference type="FunFam" id="3.30.1330.10:FF:000004">
    <property type="entry name" value="Phosphoribosylformylglycinamidine synthase subunit PurL"/>
    <property type="match status" value="1"/>
</dbReference>
<dbReference type="Gene3D" id="3.90.650.10">
    <property type="entry name" value="PurM-like C-terminal domain"/>
    <property type="match status" value="2"/>
</dbReference>
<dbReference type="Gene3D" id="3.30.1330.10">
    <property type="entry name" value="PurM-like, N-terminal domain"/>
    <property type="match status" value="2"/>
</dbReference>
<dbReference type="HAMAP" id="MF_00420">
    <property type="entry name" value="PurL_2"/>
    <property type="match status" value="1"/>
</dbReference>
<dbReference type="InterPro" id="IPR010074">
    <property type="entry name" value="PRibForGlyAmidine_synth_PurL"/>
</dbReference>
<dbReference type="InterPro" id="IPR041609">
    <property type="entry name" value="PurL_linker"/>
</dbReference>
<dbReference type="InterPro" id="IPR010918">
    <property type="entry name" value="PurM-like_C_dom"/>
</dbReference>
<dbReference type="InterPro" id="IPR036676">
    <property type="entry name" value="PurM-like_C_sf"/>
</dbReference>
<dbReference type="InterPro" id="IPR016188">
    <property type="entry name" value="PurM-like_N"/>
</dbReference>
<dbReference type="InterPro" id="IPR036921">
    <property type="entry name" value="PurM-like_N_sf"/>
</dbReference>
<dbReference type="NCBIfam" id="TIGR01736">
    <property type="entry name" value="FGAM_synth_II"/>
    <property type="match status" value="1"/>
</dbReference>
<dbReference type="NCBIfam" id="NF002290">
    <property type="entry name" value="PRK01213.1"/>
    <property type="match status" value="1"/>
</dbReference>
<dbReference type="PANTHER" id="PTHR43555">
    <property type="entry name" value="PHOSPHORIBOSYLFORMYLGLYCINAMIDINE SYNTHASE SUBUNIT PURL"/>
    <property type="match status" value="1"/>
</dbReference>
<dbReference type="PANTHER" id="PTHR43555:SF1">
    <property type="entry name" value="PHOSPHORIBOSYLFORMYLGLYCINAMIDINE SYNTHASE SUBUNIT PURL"/>
    <property type="match status" value="1"/>
</dbReference>
<dbReference type="Pfam" id="PF00586">
    <property type="entry name" value="AIRS"/>
    <property type="match status" value="2"/>
</dbReference>
<dbReference type="Pfam" id="PF02769">
    <property type="entry name" value="AIRS_C"/>
    <property type="match status" value="2"/>
</dbReference>
<dbReference type="Pfam" id="PF18072">
    <property type="entry name" value="FGAR-AT_linker"/>
    <property type="match status" value="1"/>
</dbReference>
<dbReference type="PIRSF" id="PIRSF001587">
    <property type="entry name" value="FGAM_synthase_II"/>
    <property type="match status" value="1"/>
</dbReference>
<dbReference type="SUPFAM" id="SSF56042">
    <property type="entry name" value="PurM C-terminal domain-like"/>
    <property type="match status" value="2"/>
</dbReference>
<dbReference type="SUPFAM" id="SSF55326">
    <property type="entry name" value="PurM N-terminal domain-like"/>
    <property type="match status" value="2"/>
</dbReference>
<evidence type="ECO:0000255" key="1">
    <source>
        <dbReference type="HAMAP-Rule" id="MF_00420"/>
    </source>
</evidence>
<evidence type="ECO:0000305" key="2"/>
<comment type="function">
    <text evidence="1">Part of the phosphoribosylformylglycinamidine synthase complex involved in the purines biosynthetic pathway. Catalyzes the ATP-dependent conversion of formylglycinamide ribonucleotide (FGAR) and glutamine to yield formylglycinamidine ribonucleotide (FGAM) and glutamate. The FGAM synthase complex is composed of three subunits. PurQ produces an ammonia molecule by converting glutamine to glutamate. PurL transfers the ammonia molecule to FGAR to form FGAM in an ATP-dependent manner. PurS interacts with PurQ and PurL and is thought to assist in the transfer of the ammonia molecule from PurQ to PurL.</text>
</comment>
<comment type="catalytic activity">
    <reaction evidence="1">
        <text>N(2)-formyl-N(1)-(5-phospho-beta-D-ribosyl)glycinamide + L-glutamine + ATP + H2O = 2-formamido-N(1)-(5-O-phospho-beta-D-ribosyl)acetamidine + L-glutamate + ADP + phosphate + H(+)</text>
        <dbReference type="Rhea" id="RHEA:17129"/>
        <dbReference type="ChEBI" id="CHEBI:15377"/>
        <dbReference type="ChEBI" id="CHEBI:15378"/>
        <dbReference type="ChEBI" id="CHEBI:29985"/>
        <dbReference type="ChEBI" id="CHEBI:30616"/>
        <dbReference type="ChEBI" id="CHEBI:43474"/>
        <dbReference type="ChEBI" id="CHEBI:58359"/>
        <dbReference type="ChEBI" id="CHEBI:147286"/>
        <dbReference type="ChEBI" id="CHEBI:147287"/>
        <dbReference type="ChEBI" id="CHEBI:456216"/>
        <dbReference type="EC" id="6.3.5.3"/>
    </reaction>
</comment>
<comment type="pathway">
    <text evidence="1">Purine metabolism; IMP biosynthesis via de novo pathway; 5-amino-1-(5-phospho-D-ribosyl)imidazole from N(2)-formyl-N(1)-(5-phospho-D-ribosyl)glycinamide: step 1/2.</text>
</comment>
<comment type="subunit">
    <text evidence="1">Monomer. Part of the FGAM synthase complex composed of 1 PurL, 1 PurQ and 2 PurS subunits.</text>
</comment>
<comment type="subcellular location">
    <subcellularLocation>
        <location evidence="1">Cytoplasm</location>
    </subcellularLocation>
</comment>
<comment type="similarity">
    <text evidence="1">Belongs to the FGAMS family.</text>
</comment>
<name>PURL_SYNE7</name>
<protein>
    <recommendedName>
        <fullName evidence="1">Phosphoribosylformylglycinamidine synthase subunit PurL</fullName>
        <shortName evidence="1">FGAM synthase</shortName>
        <ecNumber evidence="1">6.3.5.3</ecNumber>
    </recommendedName>
    <alternativeName>
        <fullName evidence="1">Formylglycinamide ribonucleotide amidotransferase subunit II</fullName>
        <shortName evidence="1">FGAR amidotransferase II</shortName>
        <shortName evidence="1">FGAR-AT II</shortName>
    </alternativeName>
    <alternativeName>
        <fullName evidence="1">Glutamine amidotransferase PurL</fullName>
    </alternativeName>
    <alternativeName>
        <fullName evidence="1">Phosphoribosylformylglycinamidine synthase subunit II</fullName>
    </alternativeName>
</protein>
<keyword id="KW-0067">ATP-binding</keyword>
<keyword id="KW-0963">Cytoplasm</keyword>
<keyword id="KW-0436">Ligase</keyword>
<keyword id="KW-0460">Magnesium</keyword>
<keyword id="KW-0479">Metal-binding</keyword>
<keyword id="KW-0547">Nucleotide-binding</keyword>
<keyword id="KW-0658">Purine biosynthesis</keyword>
<keyword id="KW-1185">Reference proteome</keyword>
<feature type="chain" id="PRO_0000100498" description="Phosphoribosylformylglycinamidine synthase subunit PurL">
    <location>
        <begin position="1"/>
        <end position="777"/>
    </location>
</feature>
<feature type="active site" evidence="1">
    <location>
        <position position="50"/>
    </location>
</feature>
<feature type="active site" description="Proton acceptor" evidence="1">
    <location>
        <position position="96"/>
    </location>
</feature>
<feature type="binding site" evidence="1">
    <location>
        <position position="53"/>
    </location>
    <ligand>
        <name>ATP</name>
        <dbReference type="ChEBI" id="CHEBI:30616"/>
    </ligand>
</feature>
<feature type="binding site" evidence="1">
    <location>
        <position position="92"/>
    </location>
    <ligand>
        <name>ATP</name>
        <dbReference type="ChEBI" id="CHEBI:30616"/>
    </ligand>
</feature>
<feature type="binding site" evidence="1">
    <location>
        <position position="94"/>
    </location>
    <ligand>
        <name>Mg(2+)</name>
        <dbReference type="ChEBI" id="CHEBI:18420"/>
        <label>1</label>
    </ligand>
</feature>
<feature type="binding site" evidence="1">
    <location>
        <begin position="95"/>
        <end position="98"/>
    </location>
    <ligand>
        <name>substrate</name>
    </ligand>
</feature>
<feature type="binding site" evidence="1">
    <location>
        <position position="117"/>
    </location>
    <ligand>
        <name>substrate</name>
    </ligand>
</feature>
<feature type="binding site" evidence="1">
    <location>
        <position position="118"/>
    </location>
    <ligand>
        <name>Mg(2+)</name>
        <dbReference type="ChEBI" id="CHEBI:18420"/>
        <label>2</label>
    </ligand>
</feature>
<feature type="binding site" evidence="1">
    <location>
        <position position="241"/>
    </location>
    <ligand>
        <name>substrate</name>
    </ligand>
</feature>
<feature type="binding site" evidence="1">
    <location>
        <position position="269"/>
    </location>
    <ligand>
        <name>Mg(2+)</name>
        <dbReference type="ChEBI" id="CHEBI:18420"/>
        <label>2</label>
    </ligand>
</feature>
<feature type="binding site" evidence="1">
    <location>
        <begin position="313"/>
        <end position="315"/>
    </location>
    <ligand>
        <name>substrate</name>
    </ligand>
</feature>
<feature type="binding site" evidence="1">
    <location>
        <position position="516"/>
    </location>
    <ligand>
        <name>ATP</name>
        <dbReference type="ChEBI" id="CHEBI:30616"/>
    </ligand>
</feature>
<feature type="binding site" evidence="1">
    <location>
        <position position="553"/>
    </location>
    <ligand>
        <name>ATP</name>
        <dbReference type="ChEBI" id="CHEBI:30616"/>
    </ligand>
</feature>
<feature type="binding site" evidence="1">
    <location>
        <position position="554"/>
    </location>
    <ligand>
        <name>Mg(2+)</name>
        <dbReference type="ChEBI" id="CHEBI:18420"/>
        <label>1</label>
    </ligand>
</feature>
<feature type="binding site" evidence="1">
    <location>
        <position position="556"/>
    </location>
    <ligand>
        <name>substrate</name>
    </ligand>
</feature>
<feature type="sequence conflict" description="In Ref. 2; AAA75111." evidence="2" ref="2">
    <original>I</original>
    <variation>Y</variation>
    <location>
        <position position="19"/>
    </location>
</feature>
<accession>Q55041</accession>
<accession>Q31SD4</accession>
<proteinExistence type="inferred from homology"/>
<reference key="1">
    <citation type="submission" date="2005-08" db="EMBL/GenBank/DDBJ databases">
        <title>Complete sequence of chromosome 1 of Synechococcus elongatus PCC 7942.</title>
        <authorList>
            <consortium name="US DOE Joint Genome Institute"/>
            <person name="Copeland A."/>
            <person name="Lucas S."/>
            <person name="Lapidus A."/>
            <person name="Barry K."/>
            <person name="Detter J.C."/>
            <person name="Glavina T."/>
            <person name="Hammon N."/>
            <person name="Israni S."/>
            <person name="Pitluck S."/>
            <person name="Schmutz J."/>
            <person name="Larimer F."/>
            <person name="Land M."/>
            <person name="Kyrpides N."/>
            <person name="Lykidis A."/>
            <person name="Golden S."/>
            <person name="Richardson P."/>
        </authorList>
    </citation>
    <scope>NUCLEOTIDE SEQUENCE [LARGE SCALE GENOMIC DNA]</scope>
    <source>
        <strain>ATCC 33912 / PCC 7942 / FACHB-805</strain>
    </source>
</reference>
<reference key="2">
    <citation type="submission" date="1995-08" db="EMBL/GenBank/DDBJ databases">
        <title>Circadian expression of genes involved in the de novo purine biosynthetic pathway of cyanobacteria.</title>
        <authorList>
            <person name="Liu Y."/>
            <person name="Tsinoremas N.F."/>
            <person name="Golden S.S."/>
            <person name="Kondo T."/>
            <person name="Johnson C.H."/>
        </authorList>
    </citation>
    <scope>NUCLEOTIDE SEQUENCE [GENOMIC DNA] OF 1-113</scope>
</reference>
<sequence length="777" mass="82448">MTAISSAPFSADEIAGEGIKPEEYDAIVERLGRHPNKAELGMFGVMWSEHCCYKNSRPLLSQFPTEGLRILVGPGENAGVVDLGDGLHLAFKVESHNHPSAVEPFQGAATGVGGILRDIFTMGARPIAILNSLRFGDLEQPRTRRLFHGVVSGISHYGNCVGVPTVGGEVAFDPAYNGNPLVNAMALGLMETDEIVKAGASGIGNPVLYVGSTTGRDGMGGASFASAELSDESLDDRPAVQVGDPFLEKSLIEACLEAFKTGAVVAAQDMGAAGLTCSTAEMAAKGGVGVELDLDLIPVRESGMVPYEYLLSESQERMLFVAAAGREQELIDIFHRWGLQAVVAGKIIAEPIVRIFWQGAIAAEIPATALSDNTPIYHRQLPDEPPAYAQQAWQWTIDQLPAATEVGCGDRSWNDLLLTLLDSPTIASKRWVYRQYDHQVQNNTVVLPGAADAAVVRLRPQMGAAALKTSNKGVAATTDCNARYCYLQPYEGAKAAVAEAARNLSCVGAEPLAVTDNLNFGSPEKPIGYWQLAEACRGLSEACREFSTPVTGGNVSLYNETLDSDGKPQPIYPTPVVGMVGLVPNLDRVCGQGFQSVGDRLYLLGLPTQAADDRLSLGGSEYLAIAHQTVAGLPPRIDFDLERRVQAVCRLGIHQGWIRSAHDSAEGGLAVAIAESAIAGSLGARVNLGELVGHRPDWLLFAEGGARILVSVDPAHVAVWEAELQAQIPAAWQAIGTVTEADAGLAIAAGNQPLVQLSVDQLQQTWGGAIERRLAKD</sequence>
<organism>
    <name type="scientific">Synechococcus elongatus (strain ATCC 33912 / PCC 7942 / FACHB-805)</name>
    <name type="common">Anacystis nidulans R2</name>
    <dbReference type="NCBI Taxonomy" id="1140"/>
    <lineage>
        <taxon>Bacteria</taxon>
        <taxon>Bacillati</taxon>
        <taxon>Cyanobacteriota</taxon>
        <taxon>Cyanophyceae</taxon>
        <taxon>Synechococcales</taxon>
        <taxon>Synechococcaceae</taxon>
        <taxon>Synechococcus</taxon>
    </lineage>
</organism>
<gene>
    <name evidence="1" type="primary">purL</name>
    <name type="ordered locus">Synpcc7942_0003</name>
</gene>